<comment type="function">
    <text evidence="5">Methyltransferase which catalyzes the transfer of a methyl group onto N-acetylserotonin, producing melatonin (N-acetyl-5-methoxytryptamine).</text>
</comment>
<comment type="catalytic activity">
    <reaction evidence="5">
        <text>N-acetylserotonin + S-adenosyl-L-methionine = melatonin + S-adenosyl-L-homocysteine + H(+)</text>
        <dbReference type="Rhea" id="RHEA:15573"/>
        <dbReference type="ChEBI" id="CHEBI:15378"/>
        <dbReference type="ChEBI" id="CHEBI:16796"/>
        <dbReference type="ChEBI" id="CHEBI:17697"/>
        <dbReference type="ChEBI" id="CHEBI:57856"/>
        <dbReference type="ChEBI" id="CHEBI:59789"/>
        <dbReference type="EC" id="2.1.1.4"/>
    </reaction>
</comment>
<comment type="pathway">
    <text evidence="9">Aromatic compound metabolism; melatonin biosynthesis; melatonin from serotonin: step 1/2.</text>
</comment>
<comment type="subunit">
    <text evidence="3">Homodimer.</text>
</comment>
<comment type="subcellular location">
    <subcellularLocation>
        <location evidence="6">Cytoplasm</location>
    </subcellularLocation>
</comment>
<comment type="alternative products">
    <event type="alternative splicing"/>
    <isoform>
        <id>Q8VWG4-1</id>
        <name>1</name>
        <sequence type="displayed"/>
    </isoform>
    <isoform>
        <id>Q8VWG4-2</id>
        <name>2</name>
        <sequence type="described" ref="VSP_058578"/>
    </isoform>
</comment>
<comment type="tissue specificity">
    <text evidence="5">Expressed at low levels in roots, shoots, leaves, stems and flowers.</text>
</comment>
<comment type="similarity">
    <text evidence="9">Belongs to the class I-like SAM-binding methyltransferase superfamily. Cation-independent O-methyltransferase family.</text>
</comment>
<comment type="sequence caution" evidence="9">
    <conflict type="erroneous gene model prediction">
        <sequence resource="EMBL-CDS" id="BAT09680"/>
    </conflict>
</comment>
<keyword id="KW-0025">Alternative splicing</keyword>
<keyword id="KW-0963">Cytoplasm</keyword>
<keyword id="KW-0471">Melatonin biosynthesis</keyword>
<keyword id="KW-0489">Methyltransferase</keyword>
<keyword id="KW-1185">Reference proteome</keyword>
<keyword id="KW-0949">S-adenosyl-L-methionine</keyword>
<keyword id="KW-0808">Transferase</keyword>
<reference key="1">
    <citation type="journal article" date="2003" name="Science">
        <title>In-depth view of structure, activity, and evolution of rice chromosome 10.</title>
        <authorList>
            <person name="Yu Y."/>
            <person name="Rambo T."/>
            <person name="Currie J."/>
            <person name="Saski C."/>
            <person name="Kim H.-R."/>
            <person name="Collura K."/>
            <person name="Thompson S."/>
            <person name="Simmons J."/>
            <person name="Yang T.-J."/>
            <person name="Nah G."/>
            <person name="Patel A.J."/>
            <person name="Thurmond S."/>
            <person name="Henry D."/>
            <person name="Oates R."/>
            <person name="Palmer M."/>
            <person name="Pries G."/>
            <person name="Gibson J."/>
            <person name="Anderson H."/>
            <person name="Paradkar M."/>
            <person name="Crane L."/>
            <person name="Dale J."/>
            <person name="Carver M.B."/>
            <person name="Wood T."/>
            <person name="Frisch D."/>
            <person name="Engler F."/>
            <person name="Soderlund C."/>
            <person name="Palmer L.E."/>
            <person name="Teytelman L."/>
            <person name="Nascimento L."/>
            <person name="De la Bastide M."/>
            <person name="Spiegel L."/>
            <person name="Ware D."/>
            <person name="O'Shaughnessy A."/>
            <person name="Dike S."/>
            <person name="Dedhia N."/>
            <person name="Preston R."/>
            <person name="Huang E."/>
            <person name="Ferraro K."/>
            <person name="Kuit K."/>
            <person name="Miller B."/>
            <person name="Zutavern T."/>
            <person name="Katzenberger F."/>
            <person name="Muller S."/>
            <person name="Balija V."/>
            <person name="Martienssen R.A."/>
            <person name="Stein L."/>
            <person name="Minx P."/>
            <person name="Johnson D."/>
            <person name="Cordum H."/>
            <person name="Mardis E."/>
            <person name="Cheng Z."/>
            <person name="Jiang J."/>
            <person name="Wilson R."/>
            <person name="McCombie W.R."/>
            <person name="Wing R.A."/>
            <person name="Yuan Q."/>
            <person name="Ouyang S."/>
            <person name="Liu J."/>
            <person name="Jones K.M."/>
            <person name="Gansberger K."/>
            <person name="Moffat K."/>
            <person name="Hill J."/>
            <person name="Tsitrin T."/>
            <person name="Overton L."/>
            <person name="Bera J."/>
            <person name="Kim M."/>
            <person name="Jin S."/>
            <person name="Tallon L."/>
            <person name="Ciecko A."/>
            <person name="Pai G."/>
            <person name="Van Aken S."/>
            <person name="Utterback T."/>
            <person name="Reidmuller S."/>
            <person name="Bormann J."/>
            <person name="Feldblyum T."/>
            <person name="Hsiao J."/>
            <person name="Zismann V."/>
            <person name="Blunt S."/>
            <person name="de Vazeille A.R."/>
            <person name="Shaffer T."/>
            <person name="Koo H."/>
            <person name="Suh B."/>
            <person name="Yang Q."/>
            <person name="Haas B."/>
            <person name="Peterson J."/>
            <person name="Pertea M."/>
            <person name="Volfovsky N."/>
            <person name="Wortman J."/>
            <person name="White O."/>
            <person name="Salzberg S.L."/>
            <person name="Fraser C.M."/>
            <person name="Buell C.R."/>
            <person name="Messing J."/>
            <person name="Song R."/>
            <person name="Fuks G."/>
            <person name="Llaca V."/>
            <person name="Kovchak S."/>
            <person name="Young S."/>
            <person name="Bowers J.E."/>
            <person name="Paterson A.H."/>
            <person name="Johns M.A."/>
            <person name="Mao L."/>
            <person name="Pan H."/>
            <person name="Dean R.A."/>
        </authorList>
    </citation>
    <scope>NUCLEOTIDE SEQUENCE [LARGE SCALE GENOMIC DNA]</scope>
    <source>
        <strain>cv. Nipponbare</strain>
    </source>
</reference>
<reference key="2">
    <citation type="journal article" date="2005" name="Nature">
        <title>The map-based sequence of the rice genome.</title>
        <authorList>
            <consortium name="International rice genome sequencing project (IRGSP)"/>
        </authorList>
    </citation>
    <scope>NUCLEOTIDE SEQUENCE [LARGE SCALE GENOMIC DNA]</scope>
    <source>
        <strain>cv. Nipponbare</strain>
    </source>
</reference>
<reference key="3">
    <citation type="journal article" date="2008" name="Nucleic Acids Res.">
        <title>The rice annotation project database (RAP-DB): 2008 update.</title>
        <authorList>
            <consortium name="The rice annotation project (RAP)"/>
        </authorList>
    </citation>
    <scope>GENOME REANNOTATION</scope>
    <source>
        <strain>cv. Nipponbare</strain>
    </source>
</reference>
<reference key="4">
    <citation type="journal article" date="2013" name="Rice">
        <title>Improvement of the Oryza sativa Nipponbare reference genome using next generation sequence and optical map data.</title>
        <authorList>
            <person name="Kawahara Y."/>
            <person name="de la Bastide M."/>
            <person name="Hamilton J.P."/>
            <person name="Kanamori H."/>
            <person name="McCombie W.R."/>
            <person name="Ouyang S."/>
            <person name="Schwartz D.C."/>
            <person name="Tanaka T."/>
            <person name="Wu J."/>
            <person name="Zhou S."/>
            <person name="Childs K.L."/>
            <person name="Davidson R.M."/>
            <person name="Lin H."/>
            <person name="Quesada-Ocampo L."/>
            <person name="Vaillancourt B."/>
            <person name="Sakai H."/>
            <person name="Lee S.S."/>
            <person name="Kim J."/>
            <person name="Numa H."/>
            <person name="Itoh T."/>
            <person name="Buell C.R."/>
            <person name="Matsumoto T."/>
        </authorList>
    </citation>
    <scope>GENOME REANNOTATION</scope>
    <source>
        <strain>cv. Nipponbare</strain>
    </source>
</reference>
<reference key="5">
    <citation type="journal article" date="2003" name="Science">
        <title>Collection, mapping, and annotation of over 28,000 cDNA clones from japonica rice.</title>
        <authorList>
            <consortium name="The rice full-length cDNA consortium"/>
        </authorList>
    </citation>
    <scope>NUCLEOTIDE SEQUENCE [LARGE SCALE MRNA] (ISOFORM 2)</scope>
    <source>
        <strain>cv. Nipponbare</strain>
    </source>
</reference>
<reference key="6">
    <citation type="journal article" date="2013" name="J. Pineal Res.">
        <title>Functional analyses of three ASMT gene family members in rice plants.</title>
        <authorList>
            <person name="Park S."/>
            <person name="Byeon Y."/>
            <person name="Back K."/>
        </authorList>
    </citation>
    <scope>FUNCTION</scope>
    <scope>CATALYTIC ACTIVITY</scope>
    <scope>TISSUE SPECIFICITY</scope>
</reference>
<reference key="7">
    <citation type="journal article" date="2014" name="J. Pineal Res.">
        <title>Cellular localization and kinetics of the rice melatonin biosynthetic enzymes SNAT and ASMT.</title>
        <authorList>
            <person name="Byeon Y."/>
            <person name="Lee H.Y."/>
            <person name="Lee K."/>
            <person name="Park S."/>
            <person name="Back K."/>
        </authorList>
    </citation>
    <scope>SUBCELLULAR LOCATION</scope>
</reference>
<sequence length="366" mass="40303">MAQRVQEEDEQMTSTDDLIQAEIELYHHCFAFIKSTALRAATDLCISDAIHRNGGAATLSDLALNIGLHPTKLSHLRRLMRVPTVSGVFAVEDHNGEAMYTLTRVSRLLLNGDGERTHALSHLVRVLVNPLTVASHFSIHEWFTIEQAAAMTPFEVAHGCTRWEIIANDAKDGSVFNTAMVEDSRVAMDIILKESCGVFQGISSLVDVGGGHGAAAAAIATAFPNIKCTVLDLPHIVAEAPTTHSNIQFVGGDFFEFIPAADVVLLKYILHAWQDDDCVKILRRCKEAILARDAGGKVIIIEVVVGIGPKEIVPKEMQILFDVFMMYVDGIEREEHEWKKIFLEAGFSDYKITPVLGARSIIEVYP</sequence>
<feature type="chain" id="PRO_0000437949" description="Acetylserotonin O-methyltransferase 3">
    <location>
        <begin position="1"/>
        <end position="366"/>
    </location>
</feature>
<feature type="active site" description="Proton acceptor" evidence="4">
    <location>
        <position position="271"/>
    </location>
</feature>
<feature type="active site" evidence="1">
    <location>
        <position position="302"/>
    </location>
</feature>
<feature type="active site" evidence="1">
    <location>
        <position position="332"/>
    </location>
</feature>
<feature type="binding site" evidence="2">
    <location>
        <position position="209"/>
    </location>
    <ligand>
        <name>S-adenosyl-L-homocysteine</name>
        <dbReference type="ChEBI" id="CHEBI:57856"/>
    </ligand>
</feature>
<feature type="binding site" evidence="2">
    <location>
        <position position="232"/>
    </location>
    <ligand>
        <name>S-adenosyl-L-homocysteine</name>
        <dbReference type="ChEBI" id="CHEBI:57856"/>
    </ligand>
</feature>
<feature type="binding site" evidence="2">
    <location>
        <position position="253"/>
    </location>
    <ligand>
        <name>S-adenosyl-L-homocysteine</name>
        <dbReference type="ChEBI" id="CHEBI:57856"/>
    </ligand>
</feature>
<feature type="binding site" evidence="2">
    <location>
        <position position="267"/>
    </location>
    <ligand>
        <name>S-adenosyl-L-homocysteine</name>
        <dbReference type="ChEBI" id="CHEBI:57856"/>
    </ligand>
</feature>
<feature type="splice variant" id="VSP_058578" description="In isoform 2.">
    <original>MAQRVQEEDEQMTSTDDLIQAEIELYHHCFAFIKSTALRAATDLCISDAIHRNGGAATLSDLALNIGLHPTKLSHLRRLMRVPTVSGVFAVEDHNGEAMYTLTRVSRLLLNGDGERTHALSHLVRVLVNPLTVASHFSIHEWFTIEQAAAMTPFEVAHGCTRWEIIANDAKDGSVFNTAMVEDSR</original>
    <variation>MTPFEVAHGCTRWEIIANDAKDGSVFNTAMVEDSR</variation>
    <location>
        <begin position="1"/>
        <end position="185"/>
    </location>
</feature>
<proteinExistence type="evidence at protein level"/>
<name>ASMT3_ORYSJ</name>
<dbReference type="EC" id="2.1.1.4" evidence="5"/>
<dbReference type="EMBL" id="AC079037">
    <property type="protein sequence ID" value="AAL34945.1"/>
    <property type="molecule type" value="Genomic_DNA"/>
</dbReference>
<dbReference type="EMBL" id="AC079179">
    <property type="protein sequence ID" value="AAL31646.1"/>
    <property type="molecule type" value="Genomic_DNA"/>
</dbReference>
<dbReference type="EMBL" id="DP000086">
    <property type="protein sequence ID" value="AAP51889.2"/>
    <property type="molecule type" value="Genomic_DNA"/>
</dbReference>
<dbReference type="EMBL" id="AP008216">
    <property type="protein sequence ID" value="BAF25972.1"/>
    <property type="molecule type" value="Genomic_DNA"/>
</dbReference>
<dbReference type="EMBL" id="AP014966">
    <property type="protein sequence ID" value="BAT09680.1"/>
    <property type="status" value="ALT_SEQ"/>
    <property type="molecule type" value="Genomic_DNA"/>
</dbReference>
<dbReference type="EMBL" id="AK069721">
    <property type="protein sequence ID" value="BAG91569.1"/>
    <property type="molecule type" value="mRNA"/>
</dbReference>
<dbReference type="RefSeq" id="XP_015613323.1">
    <property type="nucleotide sequence ID" value="XM_015757837.1"/>
</dbReference>
<dbReference type="SMR" id="Q8VWG4"/>
<dbReference type="FunCoup" id="Q8VWG4">
    <property type="interactions" value="284"/>
</dbReference>
<dbReference type="STRING" id="39947.Q8VWG4"/>
<dbReference type="PaxDb" id="39947-Q8VWG4"/>
<dbReference type="KEGG" id="dosa:Os10g0118000"/>
<dbReference type="InParanoid" id="Q8VWG4"/>
<dbReference type="OrthoDB" id="613486at2759"/>
<dbReference type="UniPathway" id="UPA00837">
    <property type="reaction ID" value="UER00815"/>
</dbReference>
<dbReference type="Proteomes" id="UP000000763">
    <property type="component" value="Chromosome 10"/>
</dbReference>
<dbReference type="Proteomes" id="UP000059680">
    <property type="component" value="Chromosome 10"/>
</dbReference>
<dbReference type="GO" id="GO:0005737">
    <property type="term" value="C:cytoplasm"/>
    <property type="evidence" value="ECO:0000314"/>
    <property type="project" value="UniProtKB"/>
</dbReference>
<dbReference type="GO" id="GO:0017096">
    <property type="term" value="F:acetylserotonin O-methyltransferase activity"/>
    <property type="evidence" value="ECO:0000314"/>
    <property type="project" value="UniProtKB"/>
</dbReference>
<dbReference type="GO" id="GO:0008171">
    <property type="term" value="F:O-methyltransferase activity"/>
    <property type="evidence" value="ECO:0000318"/>
    <property type="project" value="GO_Central"/>
</dbReference>
<dbReference type="GO" id="GO:0046983">
    <property type="term" value="F:protein dimerization activity"/>
    <property type="evidence" value="ECO:0007669"/>
    <property type="project" value="InterPro"/>
</dbReference>
<dbReference type="GO" id="GO:0008757">
    <property type="term" value="F:S-adenosylmethionine-dependent methyltransferase activity"/>
    <property type="evidence" value="ECO:0000318"/>
    <property type="project" value="GO_Central"/>
</dbReference>
<dbReference type="GO" id="GO:0009058">
    <property type="term" value="P:biosynthetic process"/>
    <property type="evidence" value="ECO:0000318"/>
    <property type="project" value="GO_Central"/>
</dbReference>
<dbReference type="GO" id="GO:0030187">
    <property type="term" value="P:melatonin biosynthetic process"/>
    <property type="evidence" value="ECO:0000314"/>
    <property type="project" value="UniProtKB"/>
</dbReference>
<dbReference type="GO" id="GO:0032259">
    <property type="term" value="P:methylation"/>
    <property type="evidence" value="ECO:0000318"/>
    <property type="project" value="GO_Central"/>
</dbReference>
<dbReference type="FunFam" id="1.10.10.10:FF:000292">
    <property type="entry name" value="O-methyltransferase ZRP4"/>
    <property type="match status" value="1"/>
</dbReference>
<dbReference type="FunFam" id="3.40.50.150:FF:000057">
    <property type="entry name" value="O-methyltransferase ZRP4"/>
    <property type="match status" value="1"/>
</dbReference>
<dbReference type="Gene3D" id="3.40.50.150">
    <property type="entry name" value="Vaccinia Virus protein VP39"/>
    <property type="match status" value="1"/>
</dbReference>
<dbReference type="Gene3D" id="1.10.10.10">
    <property type="entry name" value="Winged helix-like DNA-binding domain superfamily/Winged helix DNA-binding domain"/>
    <property type="match status" value="1"/>
</dbReference>
<dbReference type="InterPro" id="IPR016461">
    <property type="entry name" value="COMT-like"/>
</dbReference>
<dbReference type="InterPro" id="IPR001077">
    <property type="entry name" value="O_MeTrfase_dom"/>
</dbReference>
<dbReference type="InterPro" id="IPR012967">
    <property type="entry name" value="Plant_O-MeTrfase_dimerisation"/>
</dbReference>
<dbReference type="InterPro" id="IPR029063">
    <property type="entry name" value="SAM-dependent_MTases_sf"/>
</dbReference>
<dbReference type="InterPro" id="IPR036388">
    <property type="entry name" value="WH-like_DNA-bd_sf"/>
</dbReference>
<dbReference type="InterPro" id="IPR036390">
    <property type="entry name" value="WH_DNA-bd_sf"/>
</dbReference>
<dbReference type="PANTHER" id="PTHR11746">
    <property type="entry name" value="O-METHYLTRANSFERASE"/>
    <property type="match status" value="1"/>
</dbReference>
<dbReference type="Pfam" id="PF08100">
    <property type="entry name" value="Dimerisation"/>
    <property type="match status" value="1"/>
</dbReference>
<dbReference type="Pfam" id="PF00891">
    <property type="entry name" value="Methyltransf_2"/>
    <property type="match status" value="1"/>
</dbReference>
<dbReference type="PIRSF" id="PIRSF005739">
    <property type="entry name" value="O-mtase"/>
    <property type="match status" value="1"/>
</dbReference>
<dbReference type="SUPFAM" id="SSF53335">
    <property type="entry name" value="S-adenosyl-L-methionine-dependent methyltransferases"/>
    <property type="match status" value="1"/>
</dbReference>
<dbReference type="SUPFAM" id="SSF46785">
    <property type="entry name" value="Winged helix' DNA-binding domain"/>
    <property type="match status" value="1"/>
</dbReference>
<dbReference type="PROSITE" id="PS51683">
    <property type="entry name" value="SAM_OMT_II"/>
    <property type="match status" value="1"/>
</dbReference>
<organism>
    <name type="scientific">Oryza sativa subsp. japonica</name>
    <name type="common">Rice</name>
    <dbReference type="NCBI Taxonomy" id="39947"/>
    <lineage>
        <taxon>Eukaryota</taxon>
        <taxon>Viridiplantae</taxon>
        <taxon>Streptophyta</taxon>
        <taxon>Embryophyta</taxon>
        <taxon>Tracheophyta</taxon>
        <taxon>Spermatophyta</taxon>
        <taxon>Magnoliopsida</taxon>
        <taxon>Liliopsida</taxon>
        <taxon>Poales</taxon>
        <taxon>Poaceae</taxon>
        <taxon>BOP clade</taxon>
        <taxon>Oryzoideae</taxon>
        <taxon>Oryzeae</taxon>
        <taxon>Oryzinae</taxon>
        <taxon>Oryza</taxon>
        <taxon>Oryza sativa</taxon>
    </lineage>
</organism>
<gene>
    <name evidence="7" type="primary">ASMT3</name>
    <name evidence="13" type="ordered locus">Os10g0118000</name>
    <name evidence="12" type="ordered locus">LOC_Os10g02840</name>
    <name evidence="11" type="ORF">OSJNBa0023I19.18</name>
    <name evidence="10" type="ORF">OSJNBa0079B05.1</name>
</gene>
<evidence type="ECO:0000250" key="1">
    <source>
        <dbReference type="UniProtKB" id="F1DBB3"/>
    </source>
</evidence>
<evidence type="ECO:0000250" key="2">
    <source>
        <dbReference type="UniProtKB" id="P28002"/>
    </source>
</evidence>
<evidence type="ECO:0000250" key="3">
    <source>
        <dbReference type="UniProtKB" id="P46597"/>
    </source>
</evidence>
<evidence type="ECO:0000255" key="4">
    <source>
        <dbReference type="PROSITE-ProRule" id="PRU01020"/>
    </source>
</evidence>
<evidence type="ECO:0000269" key="5">
    <source>
    </source>
</evidence>
<evidence type="ECO:0000269" key="6">
    <source>
    </source>
</evidence>
<evidence type="ECO:0000303" key="7">
    <source>
    </source>
</evidence>
<evidence type="ECO:0000303" key="8">
    <source>
    </source>
</evidence>
<evidence type="ECO:0000305" key="9"/>
<evidence type="ECO:0000312" key="10">
    <source>
        <dbReference type="EMBL" id="AAL31646.1"/>
    </source>
</evidence>
<evidence type="ECO:0000312" key="11">
    <source>
        <dbReference type="EMBL" id="AAL34945.1"/>
    </source>
</evidence>
<evidence type="ECO:0000312" key="12">
    <source>
        <dbReference type="EMBL" id="AAP51889.2"/>
    </source>
</evidence>
<evidence type="ECO:0000312" key="13">
    <source>
        <dbReference type="EMBL" id="BAT09680.1"/>
    </source>
</evidence>
<accession>Q8VWG4</accession>
<accession>A0A0P0XRW1</accession>
<accession>Q7XH65</accession>
<protein>
    <recommendedName>
        <fullName evidence="9">Acetylserotonin O-methyltransferase 3</fullName>
        <shortName evidence="8">OsASMT3</shortName>
        <ecNumber evidence="5">2.1.1.4</ecNumber>
    </recommendedName>
</protein>